<proteinExistence type="evidence at transcript level"/>
<reference evidence="5" key="1">
    <citation type="submission" date="2007-03" db="EMBL/GenBank/DDBJ databases">
        <authorList>
            <consortium name="NIH - Xenopus Gene Collection (XGC) project"/>
        </authorList>
    </citation>
    <scope>NUCLEOTIDE SEQUENCE [LARGE SCALE MRNA]</scope>
    <source>
        <tissue evidence="5">Embryo</tissue>
    </source>
</reference>
<dbReference type="EMBL" id="BC135747">
    <property type="protein sequence ID" value="AAI35748.1"/>
    <property type="molecule type" value="mRNA"/>
</dbReference>
<dbReference type="RefSeq" id="NP_001096329.1">
    <property type="nucleotide sequence ID" value="NM_001102859.1"/>
</dbReference>
<dbReference type="SMR" id="A4IHY1"/>
<dbReference type="FunCoup" id="A4IHY1">
    <property type="interactions" value="2109"/>
</dbReference>
<dbReference type="STRING" id="8364.ENSXETP00000036832"/>
<dbReference type="PaxDb" id="8364-ENSXETP00000051203"/>
<dbReference type="DNASU" id="100124915"/>
<dbReference type="GeneID" id="100124915"/>
<dbReference type="KEGG" id="xtr:100124915"/>
<dbReference type="AGR" id="Xenbase:XB-GENE-494236"/>
<dbReference type="CTD" id="8624"/>
<dbReference type="Xenbase" id="XB-GENE-494236">
    <property type="gene designation" value="psmg1"/>
</dbReference>
<dbReference type="eggNOG" id="ENOG502QTPH">
    <property type="taxonomic scope" value="Eukaryota"/>
</dbReference>
<dbReference type="InParanoid" id="A4IHY1"/>
<dbReference type="OMA" id="SVLICQV"/>
<dbReference type="OrthoDB" id="17536at2759"/>
<dbReference type="Reactome" id="R-XTR-9907900">
    <property type="pathway name" value="Proteasome assembly"/>
</dbReference>
<dbReference type="Proteomes" id="UP000008143">
    <property type="component" value="Chromosome 2"/>
</dbReference>
<dbReference type="GO" id="GO:0005737">
    <property type="term" value="C:cytoplasm"/>
    <property type="evidence" value="ECO:0000250"/>
    <property type="project" value="UniProtKB"/>
</dbReference>
<dbReference type="GO" id="GO:0005783">
    <property type="term" value="C:endoplasmic reticulum"/>
    <property type="evidence" value="ECO:0000250"/>
    <property type="project" value="UniProtKB"/>
</dbReference>
<dbReference type="GO" id="GO:0051131">
    <property type="term" value="P:chaperone-mediated protein complex assembly"/>
    <property type="evidence" value="ECO:0000250"/>
    <property type="project" value="UniProtKB"/>
</dbReference>
<dbReference type="GO" id="GO:0043248">
    <property type="term" value="P:proteasome assembly"/>
    <property type="evidence" value="ECO:0007669"/>
    <property type="project" value="InterPro"/>
</dbReference>
<dbReference type="InterPro" id="IPR016565">
    <property type="entry name" value="Proteasome_assmbl_chp_1"/>
</dbReference>
<dbReference type="PANTHER" id="PTHR15069">
    <property type="entry name" value="PROTEASOME ASSEMBLY CHAPERONE 1"/>
    <property type="match status" value="1"/>
</dbReference>
<dbReference type="PANTHER" id="PTHR15069:SF1">
    <property type="entry name" value="PROTEASOME ASSEMBLY CHAPERONE 1"/>
    <property type="match status" value="1"/>
</dbReference>
<dbReference type="Pfam" id="PF16094">
    <property type="entry name" value="PAC1"/>
    <property type="match status" value="1"/>
</dbReference>
<accession>A4IHY1</accession>
<protein>
    <recommendedName>
        <fullName>Proteasome assembly chaperone 1</fullName>
    </recommendedName>
</protein>
<evidence type="ECO:0000250" key="1"/>
<evidence type="ECO:0000250" key="2">
    <source>
        <dbReference type="UniProtKB" id="O95456"/>
    </source>
</evidence>
<evidence type="ECO:0000255" key="3"/>
<evidence type="ECO:0000256" key="4">
    <source>
        <dbReference type="SAM" id="MobiDB-lite"/>
    </source>
</evidence>
<evidence type="ECO:0000312" key="5">
    <source>
        <dbReference type="EMBL" id="AAI35748.1"/>
    </source>
</evidence>
<feature type="chain" id="PRO_0000322550" description="Proteasome assembly chaperone 1">
    <location>
        <begin position="1"/>
        <end position="287"/>
    </location>
</feature>
<feature type="region of interest" description="Disordered" evidence="4">
    <location>
        <begin position="1"/>
        <end position="32"/>
    </location>
</feature>
<feature type="compositionally biased region" description="Acidic residues" evidence="4">
    <location>
        <begin position="17"/>
        <end position="32"/>
    </location>
</feature>
<sequence>MATFFGEVQSVFSRAVDEDDEEEEGEEEEEDREIIAELERKREVHVTWNPEVTAAIESSPNRRLPCSNVILSVGDNATGFVSSYILSSGSWEVCGSITLWNERCRDCNPRKDSLPAPSSCTFYRSITDPTVLLCQCNSYIAEDQLFQWCEKVFGSLEKSSLNVTVLSTCPVSEYKTPESTYSLPVPFLKALRTSEYREEVPCPLLEQPNIADGLPAAVLTYCQVWQIPAVFYRCYTDLSKLDSITIDAFRPLLSCQRMSRLAADSAKIQETLRKTVKSSEIQSNLYI</sequence>
<name>PSMG1_XENTR</name>
<comment type="function">
    <text evidence="1">Chaperone protein which promotes assembly of the 20S proteasome as part of a heterodimer with psmg2.</text>
</comment>
<comment type="subunit">
    <text evidence="1">Forms a heterodimer with psmg2.</text>
</comment>
<comment type="subcellular location">
    <subcellularLocation>
        <location evidence="2">Cytoplasm</location>
    </subcellularLocation>
    <subcellularLocation>
        <location evidence="2">Endoplasmic reticulum</location>
    </subcellularLocation>
</comment>
<comment type="PTM">
    <text evidence="2">Degraded by the proteasome upon completion of 20S proteasome maturation.</text>
</comment>
<comment type="similarity">
    <text evidence="3">Belongs to the PSMG1 family.</text>
</comment>
<gene>
    <name evidence="2" type="primary">psmg1</name>
</gene>
<organism>
    <name type="scientific">Xenopus tropicalis</name>
    <name type="common">Western clawed frog</name>
    <name type="synonym">Silurana tropicalis</name>
    <dbReference type="NCBI Taxonomy" id="8364"/>
    <lineage>
        <taxon>Eukaryota</taxon>
        <taxon>Metazoa</taxon>
        <taxon>Chordata</taxon>
        <taxon>Craniata</taxon>
        <taxon>Vertebrata</taxon>
        <taxon>Euteleostomi</taxon>
        <taxon>Amphibia</taxon>
        <taxon>Batrachia</taxon>
        <taxon>Anura</taxon>
        <taxon>Pipoidea</taxon>
        <taxon>Pipidae</taxon>
        <taxon>Xenopodinae</taxon>
        <taxon>Xenopus</taxon>
        <taxon>Silurana</taxon>
    </lineage>
</organism>
<keyword id="KW-0143">Chaperone</keyword>
<keyword id="KW-0963">Cytoplasm</keyword>
<keyword id="KW-0256">Endoplasmic reticulum</keyword>
<keyword id="KW-1185">Reference proteome</keyword>